<evidence type="ECO:0000255" key="1">
    <source>
        <dbReference type="HAMAP-Rule" id="MF_00300"/>
    </source>
</evidence>
<evidence type="ECO:0000256" key="2">
    <source>
        <dbReference type="SAM" id="MobiDB-lite"/>
    </source>
</evidence>
<proteinExistence type="inferred from homology"/>
<keyword id="KW-0028">Amino-acid biosynthesis</keyword>
<keyword id="KW-0057">Aromatic amino acid biosynthesis</keyword>
<keyword id="KW-0274">FAD</keyword>
<keyword id="KW-0285">Flavoprotein</keyword>
<keyword id="KW-0288">FMN</keyword>
<keyword id="KW-0456">Lyase</keyword>
<keyword id="KW-0521">NADP</keyword>
<keyword id="KW-1185">Reference proteome</keyword>
<feature type="chain" id="PRO_0000140619" description="Chorismate synthase">
    <location>
        <begin position="1"/>
        <end position="390"/>
    </location>
</feature>
<feature type="region of interest" description="Disordered" evidence="2">
    <location>
        <begin position="359"/>
        <end position="390"/>
    </location>
</feature>
<feature type="binding site" evidence="1">
    <location>
        <position position="48"/>
    </location>
    <ligand>
        <name>NADP(+)</name>
        <dbReference type="ChEBI" id="CHEBI:58349"/>
    </ligand>
</feature>
<feature type="binding site" evidence="1">
    <location>
        <position position="54"/>
    </location>
    <ligand>
        <name>NADP(+)</name>
        <dbReference type="ChEBI" id="CHEBI:58349"/>
    </ligand>
</feature>
<feature type="binding site" evidence="1">
    <location>
        <begin position="125"/>
        <end position="127"/>
    </location>
    <ligand>
        <name>FMN</name>
        <dbReference type="ChEBI" id="CHEBI:58210"/>
    </ligand>
</feature>
<feature type="binding site" evidence="1">
    <location>
        <begin position="238"/>
        <end position="239"/>
    </location>
    <ligand>
        <name>FMN</name>
        <dbReference type="ChEBI" id="CHEBI:58210"/>
    </ligand>
</feature>
<feature type="binding site" evidence="1">
    <location>
        <position position="278"/>
    </location>
    <ligand>
        <name>FMN</name>
        <dbReference type="ChEBI" id="CHEBI:58210"/>
    </ligand>
</feature>
<feature type="binding site" evidence="1">
    <location>
        <begin position="293"/>
        <end position="297"/>
    </location>
    <ligand>
        <name>FMN</name>
        <dbReference type="ChEBI" id="CHEBI:58210"/>
    </ligand>
</feature>
<feature type="binding site" evidence="1">
    <location>
        <position position="319"/>
    </location>
    <ligand>
        <name>FMN</name>
        <dbReference type="ChEBI" id="CHEBI:58210"/>
    </ligand>
</feature>
<dbReference type="EC" id="4.2.3.5" evidence="1"/>
<dbReference type="EMBL" id="AL954747">
    <property type="protein sequence ID" value="CAD85788.1"/>
    <property type="molecule type" value="Genomic_DNA"/>
</dbReference>
<dbReference type="RefSeq" id="WP_011112415.1">
    <property type="nucleotide sequence ID" value="NC_004757.1"/>
</dbReference>
<dbReference type="SMR" id="Q82TK9"/>
<dbReference type="STRING" id="228410.NE1877"/>
<dbReference type="GeneID" id="87105035"/>
<dbReference type="KEGG" id="neu:NE1877"/>
<dbReference type="eggNOG" id="COG0082">
    <property type="taxonomic scope" value="Bacteria"/>
</dbReference>
<dbReference type="HOGENOM" id="CLU_034547_0_2_4"/>
<dbReference type="OrthoDB" id="9771806at2"/>
<dbReference type="PhylomeDB" id="Q82TK9"/>
<dbReference type="UniPathway" id="UPA00053">
    <property type="reaction ID" value="UER00090"/>
</dbReference>
<dbReference type="Proteomes" id="UP000001416">
    <property type="component" value="Chromosome"/>
</dbReference>
<dbReference type="GO" id="GO:0005829">
    <property type="term" value="C:cytosol"/>
    <property type="evidence" value="ECO:0007669"/>
    <property type="project" value="TreeGrafter"/>
</dbReference>
<dbReference type="GO" id="GO:0004107">
    <property type="term" value="F:chorismate synthase activity"/>
    <property type="evidence" value="ECO:0007669"/>
    <property type="project" value="UniProtKB-UniRule"/>
</dbReference>
<dbReference type="GO" id="GO:0010181">
    <property type="term" value="F:FMN binding"/>
    <property type="evidence" value="ECO:0007669"/>
    <property type="project" value="TreeGrafter"/>
</dbReference>
<dbReference type="GO" id="GO:0008652">
    <property type="term" value="P:amino acid biosynthetic process"/>
    <property type="evidence" value="ECO:0007669"/>
    <property type="project" value="UniProtKB-KW"/>
</dbReference>
<dbReference type="GO" id="GO:0009073">
    <property type="term" value="P:aromatic amino acid family biosynthetic process"/>
    <property type="evidence" value="ECO:0007669"/>
    <property type="project" value="UniProtKB-KW"/>
</dbReference>
<dbReference type="GO" id="GO:0009423">
    <property type="term" value="P:chorismate biosynthetic process"/>
    <property type="evidence" value="ECO:0007669"/>
    <property type="project" value="UniProtKB-UniRule"/>
</dbReference>
<dbReference type="CDD" id="cd07304">
    <property type="entry name" value="Chorismate_synthase"/>
    <property type="match status" value="1"/>
</dbReference>
<dbReference type="FunFam" id="3.60.150.10:FF:000001">
    <property type="entry name" value="Chorismate synthase"/>
    <property type="match status" value="1"/>
</dbReference>
<dbReference type="Gene3D" id="3.60.150.10">
    <property type="entry name" value="Chorismate synthase AroC"/>
    <property type="match status" value="1"/>
</dbReference>
<dbReference type="HAMAP" id="MF_00300">
    <property type="entry name" value="Chorismate_synth"/>
    <property type="match status" value="1"/>
</dbReference>
<dbReference type="InterPro" id="IPR000453">
    <property type="entry name" value="Chorismate_synth"/>
</dbReference>
<dbReference type="InterPro" id="IPR035904">
    <property type="entry name" value="Chorismate_synth_AroC_sf"/>
</dbReference>
<dbReference type="InterPro" id="IPR020541">
    <property type="entry name" value="Chorismate_synthase_CS"/>
</dbReference>
<dbReference type="NCBIfam" id="TIGR00033">
    <property type="entry name" value="aroC"/>
    <property type="match status" value="1"/>
</dbReference>
<dbReference type="NCBIfam" id="NF003793">
    <property type="entry name" value="PRK05382.1"/>
    <property type="match status" value="1"/>
</dbReference>
<dbReference type="PANTHER" id="PTHR21085">
    <property type="entry name" value="CHORISMATE SYNTHASE"/>
    <property type="match status" value="1"/>
</dbReference>
<dbReference type="PANTHER" id="PTHR21085:SF0">
    <property type="entry name" value="CHORISMATE SYNTHASE"/>
    <property type="match status" value="1"/>
</dbReference>
<dbReference type="Pfam" id="PF01264">
    <property type="entry name" value="Chorismate_synt"/>
    <property type="match status" value="1"/>
</dbReference>
<dbReference type="PIRSF" id="PIRSF001456">
    <property type="entry name" value="Chorismate_synth"/>
    <property type="match status" value="1"/>
</dbReference>
<dbReference type="SUPFAM" id="SSF103263">
    <property type="entry name" value="Chorismate synthase, AroC"/>
    <property type="match status" value="1"/>
</dbReference>
<dbReference type="PROSITE" id="PS00787">
    <property type="entry name" value="CHORISMATE_SYNTHASE_1"/>
    <property type="match status" value="1"/>
</dbReference>
<dbReference type="PROSITE" id="PS00788">
    <property type="entry name" value="CHORISMATE_SYNTHASE_2"/>
    <property type="match status" value="1"/>
</dbReference>
<dbReference type="PROSITE" id="PS00789">
    <property type="entry name" value="CHORISMATE_SYNTHASE_3"/>
    <property type="match status" value="1"/>
</dbReference>
<comment type="function">
    <text evidence="1">Catalyzes the anti-1,4-elimination of the C-3 phosphate and the C-6 proR hydrogen from 5-enolpyruvylshikimate-3-phosphate (EPSP) to yield chorismate, which is the branch point compound that serves as the starting substrate for the three terminal pathways of aromatic amino acid biosynthesis. This reaction introduces a second double bond into the aromatic ring system.</text>
</comment>
<comment type="catalytic activity">
    <reaction evidence="1">
        <text>5-O-(1-carboxyvinyl)-3-phosphoshikimate = chorismate + phosphate</text>
        <dbReference type="Rhea" id="RHEA:21020"/>
        <dbReference type="ChEBI" id="CHEBI:29748"/>
        <dbReference type="ChEBI" id="CHEBI:43474"/>
        <dbReference type="ChEBI" id="CHEBI:57701"/>
        <dbReference type="EC" id="4.2.3.5"/>
    </reaction>
</comment>
<comment type="cofactor">
    <cofactor evidence="1">
        <name>FMNH2</name>
        <dbReference type="ChEBI" id="CHEBI:57618"/>
    </cofactor>
    <text evidence="1">Reduced FMN (FMNH(2)).</text>
</comment>
<comment type="pathway">
    <text evidence="1">Metabolic intermediate biosynthesis; chorismate biosynthesis; chorismate from D-erythrose 4-phosphate and phosphoenolpyruvate: step 7/7.</text>
</comment>
<comment type="subunit">
    <text evidence="1">Homotetramer.</text>
</comment>
<comment type="similarity">
    <text evidence="1">Belongs to the chorismate synthase family.</text>
</comment>
<reference key="1">
    <citation type="journal article" date="2003" name="J. Bacteriol.">
        <title>Complete genome sequence of the ammonia-oxidizing bacterium and obligate chemolithoautotroph Nitrosomonas europaea.</title>
        <authorList>
            <person name="Chain P."/>
            <person name="Lamerdin J.E."/>
            <person name="Larimer F.W."/>
            <person name="Regala W."/>
            <person name="Lao V."/>
            <person name="Land M.L."/>
            <person name="Hauser L."/>
            <person name="Hooper A.B."/>
            <person name="Klotz M.G."/>
            <person name="Norton J."/>
            <person name="Sayavedra-Soto L.A."/>
            <person name="Arciero D.M."/>
            <person name="Hommes N.G."/>
            <person name="Whittaker M.M."/>
            <person name="Arp D.J."/>
        </authorList>
    </citation>
    <scope>NUCLEOTIDE SEQUENCE [LARGE SCALE GENOMIC DNA]</scope>
    <source>
        <strain>ATCC 19718 / CIP 103999 / KCTC 2705 / NBRC 14298</strain>
    </source>
</reference>
<sequence length="390" mass="42228">MSGNSIGKLFSVTSFGESHGPAIGCIVDGCPPGLTLSVEDIQQELDRRKPGTSRHVTQRREADRVEILSGVFENTTTGTPIALLIRNEDQRSKDYSKIMDVFRPGHADYTYWQKYGIRDYRGGGRSSARETAVRVAAGAIARKWLQQRYGIVIRGYMAQLGSIAIPFKSWDVVNQNPFFVADNDYVQKLETFMDSLRKSGNSAGARINVVAEGVPVGWGEPVYDRLDADIAYAMMSINAVKGVEIGAGFNSITQKGTEHSDEITPEGFLSNNAGGILGGISSGQPVVVSVAIKPTSSIRLARRSIDKAGNPVLVETHGRHDPCVGIRATPIVEAMLAIVLMDHALRHRAQNADVVCSTPRIPGSTTNQIHPVEMQASAPRAEDPEPDESS</sequence>
<protein>
    <recommendedName>
        <fullName evidence="1">Chorismate synthase</fullName>
        <shortName evidence="1">CS</shortName>
        <ecNumber evidence="1">4.2.3.5</ecNumber>
    </recommendedName>
    <alternativeName>
        <fullName evidence="1">5-enolpyruvylshikimate-3-phosphate phospholyase</fullName>
    </alternativeName>
</protein>
<gene>
    <name evidence="1" type="primary">aroC</name>
    <name type="ordered locus">NE1877</name>
</gene>
<organism>
    <name type="scientific">Nitrosomonas europaea (strain ATCC 19718 / CIP 103999 / KCTC 2705 / NBRC 14298)</name>
    <dbReference type="NCBI Taxonomy" id="228410"/>
    <lineage>
        <taxon>Bacteria</taxon>
        <taxon>Pseudomonadati</taxon>
        <taxon>Pseudomonadota</taxon>
        <taxon>Betaproteobacteria</taxon>
        <taxon>Nitrosomonadales</taxon>
        <taxon>Nitrosomonadaceae</taxon>
        <taxon>Nitrosomonas</taxon>
    </lineage>
</organism>
<name>AROC_NITEU</name>
<accession>Q82TK9</accession>